<dbReference type="EC" id="1.5.1.2" evidence="1"/>
<dbReference type="EMBL" id="AL123456">
    <property type="protein sequence ID" value="CCP43235.1"/>
    <property type="molecule type" value="Genomic_DNA"/>
</dbReference>
<dbReference type="PIR" id="G70745">
    <property type="entry name" value="G70745"/>
</dbReference>
<dbReference type="RefSeq" id="NP_215014.1">
    <property type="nucleotide sequence ID" value="NC_000962.3"/>
</dbReference>
<dbReference type="RefSeq" id="WP_003900159.1">
    <property type="nucleotide sequence ID" value="NC_000962.3"/>
</dbReference>
<dbReference type="SMR" id="P9WHU7"/>
<dbReference type="FunCoup" id="P9WHU7">
    <property type="interactions" value="464"/>
</dbReference>
<dbReference type="STRING" id="83332.Rv0500"/>
<dbReference type="PaxDb" id="83332-Rv0500"/>
<dbReference type="DNASU" id="887256"/>
<dbReference type="GeneID" id="887256"/>
<dbReference type="KEGG" id="mtu:Rv0500"/>
<dbReference type="KEGG" id="mtv:RVBD_0500"/>
<dbReference type="TubercuList" id="Rv0500"/>
<dbReference type="eggNOG" id="COG0345">
    <property type="taxonomic scope" value="Bacteria"/>
</dbReference>
<dbReference type="InParanoid" id="P9WHU7"/>
<dbReference type="OrthoDB" id="9805754at2"/>
<dbReference type="PhylomeDB" id="P9WHU7"/>
<dbReference type="UniPathway" id="UPA00098">
    <property type="reaction ID" value="UER00361"/>
</dbReference>
<dbReference type="Proteomes" id="UP000001584">
    <property type="component" value="Chromosome"/>
</dbReference>
<dbReference type="GO" id="GO:0005737">
    <property type="term" value="C:cytoplasm"/>
    <property type="evidence" value="ECO:0007669"/>
    <property type="project" value="UniProtKB-SubCell"/>
</dbReference>
<dbReference type="GO" id="GO:0005886">
    <property type="term" value="C:plasma membrane"/>
    <property type="evidence" value="ECO:0007005"/>
    <property type="project" value="MTBBASE"/>
</dbReference>
<dbReference type="GO" id="GO:0000287">
    <property type="term" value="F:magnesium ion binding"/>
    <property type="evidence" value="ECO:0000314"/>
    <property type="project" value="MTBBASE"/>
</dbReference>
<dbReference type="GO" id="GO:0030145">
    <property type="term" value="F:manganese ion binding"/>
    <property type="evidence" value="ECO:0000314"/>
    <property type="project" value="MTBBASE"/>
</dbReference>
<dbReference type="GO" id="GO:0004735">
    <property type="term" value="F:pyrroline-5-carboxylate reductase activity"/>
    <property type="evidence" value="ECO:0000314"/>
    <property type="project" value="MTBBASE"/>
</dbReference>
<dbReference type="GO" id="GO:0055129">
    <property type="term" value="P:L-proline biosynthetic process"/>
    <property type="evidence" value="ECO:0000318"/>
    <property type="project" value="GO_Central"/>
</dbReference>
<dbReference type="GO" id="GO:0006561">
    <property type="term" value="P:proline biosynthetic process"/>
    <property type="evidence" value="ECO:0000314"/>
    <property type="project" value="MTBBASE"/>
</dbReference>
<dbReference type="FunFam" id="1.10.3730.10:FF:000008">
    <property type="entry name" value="Pyrroline-5-carboxylate reductase"/>
    <property type="match status" value="1"/>
</dbReference>
<dbReference type="FunFam" id="3.40.50.720:FF:000915">
    <property type="entry name" value="Pyrroline-5-carboxylate reductase"/>
    <property type="match status" value="1"/>
</dbReference>
<dbReference type="Gene3D" id="3.40.50.720">
    <property type="entry name" value="NAD(P)-binding Rossmann-like Domain"/>
    <property type="match status" value="1"/>
</dbReference>
<dbReference type="Gene3D" id="1.10.3730.10">
    <property type="entry name" value="ProC C-terminal domain-like"/>
    <property type="match status" value="1"/>
</dbReference>
<dbReference type="HAMAP" id="MF_01925">
    <property type="entry name" value="P5C_reductase"/>
    <property type="match status" value="1"/>
</dbReference>
<dbReference type="InterPro" id="IPR008927">
    <property type="entry name" value="6-PGluconate_DH-like_C_sf"/>
</dbReference>
<dbReference type="InterPro" id="IPR036291">
    <property type="entry name" value="NAD(P)-bd_dom_sf"/>
</dbReference>
<dbReference type="InterPro" id="IPR028939">
    <property type="entry name" value="P5C_Rdtase_cat_N"/>
</dbReference>
<dbReference type="InterPro" id="IPR053790">
    <property type="entry name" value="P5CR-like_CS"/>
</dbReference>
<dbReference type="InterPro" id="IPR029036">
    <property type="entry name" value="P5CR_dimer"/>
</dbReference>
<dbReference type="InterPro" id="IPR000304">
    <property type="entry name" value="Pyrroline-COOH_reductase"/>
</dbReference>
<dbReference type="NCBIfam" id="TIGR00112">
    <property type="entry name" value="proC"/>
    <property type="match status" value="1"/>
</dbReference>
<dbReference type="PANTHER" id="PTHR11645">
    <property type="entry name" value="PYRROLINE-5-CARBOXYLATE REDUCTASE"/>
    <property type="match status" value="1"/>
</dbReference>
<dbReference type="PANTHER" id="PTHR11645:SF0">
    <property type="entry name" value="PYRROLINE-5-CARBOXYLATE REDUCTASE 3"/>
    <property type="match status" value="1"/>
</dbReference>
<dbReference type="Pfam" id="PF03807">
    <property type="entry name" value="F420_oxidored"/>
    <property type="match status" value="1"/>
</dbReference>
<dbReference type="Pfam" id="PF14748">
    <property type="entry name" value="P5CR_dimer"/>
    <property type="match status" value="1"/>
</dbReference>
<dbReference type="PIRSF" id="PIRSF000193">
    <property type="entry name" value="Pyrrol-5-carb_rd"/>
    <property type="match status" value="1"/>
</dbReference>
<dbReference type="SUPFAM" id="SSF48179">
    <property type="entry name" value="6-phosphogluconate dehydrogenase C-terminal domain-like"/>
    <property type="match status" value="1"/>
</dbReference>
<dbReference type="SUPFAM" id="SSF51735">
    <property type="entry name" value="NAD(P)-binding Rossmann-fold domains"/>
    <property type="match status" value="1"/>
</dbReference>
<dbReference type="PROSITE" id="PS00521">
    <property type="entry name" value="P5CR"/>
    <property type="match status" value="1"/>
</dbReference>
<evidence type="ECO:0000255" key="1">
    <source>
        <dbReference type="HAMAP-Rule" id="MF_01925"/>
    </source>
</evidence>
<gene>
    <name evidence="1" type="primary">proC</name>
    <name type="ordered locus">Rv0500</name>
    <name type="ORF">MTCY20G9.26</name>
</gene>
<name>P5CR_MYCTU</name>
<keyword id="KW-0028">Amino-acid biosynthesis</keyword>
<keyword id="KW-0963">Cytoplasm</keyword>
<keyword id="KW-0521">NADP</keyword>
<keyword id="KW-0560">Oxidoreductase</keyword>
<keyword id="KW-0641">Proline biosynthesis</keyword>
<keyword id="KW-1185">Reference proteome</keyword>
<protein>
    <recommendedName>
        <fullName evidence="1">Pyrroline-5-carboxylate reductase</fullName>
        <shortName evidence="1">P5C reductase</shortName>
        <shortName evidence="1">P5CR</shortName>
        <ecNumber evidence="1">1.5.1.2</ecNumber>
    </recommendedName>
    <alternativeName>
        <fullName evidence="1">PCA reductase</fullName>
    </alternativeName>
</protein>
<comment type="function">
    <text evidence="1">Catalyzes the reduction of 1-pyrroline-5-carboxylate (PCA) to L-proline.</text>
</comment>
<comment type="catalytic activity">
    <reaction evidence="1">
        <text>L-proline + NADP(+) = (S)-1-pyrroline-5-carboxylate + NADPH + 2 H(+)</text>
        <dbReference type="Rhea" id="RHEA:14109"/>
        <dbReference type="ChEBI" id="CHEBI:15378"/>
        <dbReference type="ChEBI" id="CHEBI:17388"/>
        <dbReference type="ChEBI" id="CHEBI:57783"/>
        <dbReference type="ChEBI" id="CHEBI:58349"/>
        <dbReference type="ChEBI" id="CHEBI:60039"/>
        <dbReference type="EC" id="1.5.1.2"/>
    </reaction>
</comment>
<comment type="catalytic activity">
    <reaction evidence="1">
        <text>L-proline + NAD(+) = (S)-1-pyrroline-5-carboxylate + NADH + 2 H(+)</text>
        <dbReference type="Rhea" id="RHEA:14105"/>
        <dbReference type="ChEBI" id="CHEBI:15378"/>
        <dbReference type="ChEBI" id="CHEBI:17388"/>
        <dbReference type="ChEBI" id="CHEBI:57540"/>
        <dbReference type="ChEBI" id="CHEBI:57945"/>
        <dbReference type="ChEBI" id="CHEBI:60039"/>
        <dbReference type="EC" id="1.5.1.2"/>
    </reaction>
</comment>
<comment type="pathway">
    <text evidence="1">Amino-acid biosynthesis; L-proline biosynthesis; L-proline from L-glutamate 5-semialdehyde: step 1/1.</text>
</comment>
<comment type="subcellular location">
    <subcellularLocation>
        <location evidence="1">Cytoplasm</location>
    </subcellularLocation>
</comment>
<comment type="similarity">
    <text evidence="1">Belongs to the pyrroline-5-carboxylate reductase family.</text>
</comment>
<reference key="1">
    <citation type="journal article" date="1998" name="Nature">
        <title>Deciphering the biology of Mycobacterium tuberculosis from the complete genome sequence.</title>
        <authorList>
            <person name="Cole S.T."/>
            <person name="Brosch R."/>
            <person name="Parkhill J."/>
            <person name="Garnier T."/>
            <person name="Churcher C.M."/>
            <person name="Harris D.E."/>
            <person name="Gordon S.V."/>
            <person name="Eiglmeier K."/>
            <person name="Gas S."/>
            <person name="Barry C.E. III"/>
            <person name="Tekaia F."/>
            <person name="Badcock K."/>
            <person name="Basham D."/>
            <person name="Brown D."/>
            <person name="Chillingworth T."/>
            <person name="Connor R."/>
            <person name="Davies R.M."/>
            <person name="Devlin K."/>
            <person name="Feltwell T."/>
            <person name="Gentles S."/>
            <person name="Hamlin N."/>
            <person name="Holroyd S."/>
            <person name="Hornsby T."/>
            <person name="Jagels K."/>
            <person name="Krogh A."/>
            <person name="McLean J."/>
            <person name="Moule S."/>
            <person name="Murphy L.D."/>
            <person name="Oliver S."/>
            <person name="Osborne J."/>
            <person name="Quail M.A."/>
            <person name="Rajandream M.A."/>
            <person name="Rogers J."/>
            <person name="Rutter S."/>
            <person name="Seeger K."/>
            <person name="Skelton S."/>
            <person name="Squares S."/>
            <person name="Squares R."/>
            <person name="Sulston J.E."/>
            <person name="Taylor K."/>
            <person name="Whitehead S."/>
            <person name="Barrell B.G."/>
        </authorList>
    </citation>
    <scope>NUCLEOTIDE SEQUENCE [LARGE SCALE GENOMIC DNA]</scope>
    <source>
        <strain>ATCC 25618 / H37Rv</strain>
    </source>
</reference>
<reference key="2">
    <citation type="journal article" date="2011" name="Mol. Cell. Proteomics">
        <title>Proteogenomic analysis of Mycobacterium tuberculosis by high resolution mass spectrometry.</title>
        <authorList>
            <person name="Kelkar D.S."/>
            <person name="Kumar D."/>
            <person name="Kumar P."/>
            <person name="Balakrishnan L."/>
            <person name="Muthusamy B."/>
            <person name="Yadav A.K."/>
            <person name="Shrivastava P."/>
            <person name="Marimuthu A."/>
            <person name="Anand S."/>
            <person name="Sundaram H."/>
            <person name="Kingsbury R."/>
            <person name="Harsha H.C."/>
            <person name="Nair B."/>
            <person name="Prasad T.S."/>
            <person name="Chauhan D.S."/>
            <person name="Katoch K."/>
            <person name="Katoch V.M."/>
            <person name="Kumar P."/>
            <person name="Chaerkady R."/>
            <person name="Ramachandran S."/>
            <person name="Dash D."/>
            <person name="Pandey A."/>
        </authorList>
    </citation>
    <scope>IDENTIFICATION BY MASS SPECTROMETRY [LARGE SCALE ANALYSIS]</scope>
    <source>
        <strain>ATCC 25618 / H37Rv</strain>
    </source>
</reference>
<organism>
    <name type="scientific">Mycobacterium tuberculosis (strain ATCC 25618 / H37Rv)</name>
    <dbReference type="NCBI Taxonomy" id="83332"/>
    <lineage>
        <taxon>Bacteria</taxon>
        <taxon>Bacillati</taxon>
        <taxon>Actinomycetota</taxon>
        <taxon>Actinomycetes</taxon>
        <taxon>Mycobacteriales</taxon>
        <taxon>Mycobacteriaceae</taxon>
        <taxon>Mycobacterium</taxon>
        <taxon>Mycobacterium tuberculosis complex</taxon>
    </lineage>
</organism>
<proteinExistence type="evidence at protein level"/>
<sequence>MLFGMARIAIIGGGSIGEALLSGLLRAGRQVKDLVVAERMPDRANYLAQTYSVLVTSAADAVENATFVVVAVKPADVEPVIADLANATAAAENDSAEQVFVTVVAGITIAYFESKLPAGTPVVRAMPNAAALVGAGVTALAKGRFVTPQQLEEVSALFDAVGGVLTVPESQLDAVTAVSGSGPAYFFLLVEALVDAGVGVGLSRQVATDLAAQTMAGSAAMLLERMEQDQGGANGELMGLRVDLTASRLRAAVTSPGGTTAAALRELERGGFRMAVDAAVQAAKSRSEQLRITPE</sequence>
<feature type="chain" id="PRO_0000187294" description="Pyrroline-5-carboxylate reductase">
    <location>
        <begin position="1"/>
        <end position="295"/>
    </location>
</feature>
<accession>P9WHU7</accession>
<accession>L0T3T3</accession>
<accession>Q11141</accession>